<gene>
    <name evidence="1" type="primary">rplQ</name>
    <name type="ordered locus">SO_0257</name>
</gene>
<protein>
    <recommendedName>
        <fullName evidence="1">Large ribosomal subunit protein bL17</fullName>
    </recommendedName>
    <alternativeName>
        <fullName evidence="2">50S ribosomal protein L17</fullName>
    </alternativeName>
</protein>
<name>RL17_SHEON</name>
<organism>
    <name type="scientific">Shewanella oneidensis (strain ATCC 700550 / JCM 31522 / CIP 106686 / LMG 19005 / NCIMB 14063 / MR-1)</name>
    <dbReference type="NCBI Taxonomy" id="211586"/>
    <lineage>
        <taxon>Bacteria</taxon>
        <taxon>Pseudomonadati</taxon>
        <taxon>Pseudomonadota</taxon>
        <taxon>Gammaproteobacteria</taxon>
        <taxon>Alteromonadales</taxon>
        <taxon>Shewanellaceae</taxon>
        <taxon>Shewanella</taxon>
    </lineage>
</organism>
<dbReference type="EMBL" id="AE014299">
    <property type="protein sequence ID" value="AAN53342.1"/>
    <property type="molecule type" value="Genomic_DNA"/>
</dbReference>
<dbReference type="RefSeq" id="NP_715897.1">
    <property type="nucleotide sequence ID" value="NC_004347.2"/>
</dbReference>
<dbReference type="RefSeq" id="WP_007644470.1">
    <property type="nucleotide sequence ID" value="NZ_CP053946.1"/>
</dbReference>
<dbReference type="SMR" id="Q8EK46"/>
<dbReference type="STRING" id="211586.SO_0257"/>
<dbReference type="PaxDb" id="211586-SO_0257"/>
<dbReference type="GeneID" id="75190592"/>
<dbReference type="KEGG" id="son:SO_0257"/>
<dbReference type="PATRIC" id="fig|211586.12.peg.245"/>
<dbReference type="eggNOG" id="COG0203">
    <property type="taxonomic scope" value="Bacteria"/>
</dbReference>
<dbReference type="HOGENOM" id="CLU_074407_2_0_6"/>
<dbReference type="OrthoDB" id="9809073at2"/>
<dbReference type="PhylomeDB" id="Q8EK46"/>
<dbReference type="BioCyc" id="SONE211586:G1GMP-246-MONOMER"/>
<dbReference type="Proteomes" id="UP000008186">
    <property type="component" value="Chromosome"/>
</dbReference>
<dbReference type="GO" id="GO:0022625">
    <property type="term" value="C:cytosolic large ribosomal subunit"/>
    <property type="evidence" value="ECO:0000318"/>
    <property type="project" value="GO_Central"/>
</dbReference>
<dbReference type="GO" id="GO:0003735">
    <property type="term" value="F:structural constituent of ribosome"/>
    <property type="evidence" value="ECO:0000318"/>
    <property type="project" value="GO_Central"/>
</dbReference>
<dbReference type="GO" id="GO:0006412">
    <property type="term" value="P:translation"/>
    <property type="evidence" value="ECO:0007669"/>
    <property type="project" value="UniProtKB-UniRule"/>
</dbReference>
<dbReference type="FunFam" id="3.90.1030.10:FF:000001">
    <property type="entry name" value="50S ribosomal protein L17"/>
    <property type="match status" value="1"/>
</dbReference>
<dbReference type="Gene3D" id="3.90.1030.10">
    <property type="entry name" value="Ribosomal protein L17"/>
    <property type="match status" value="1"/>
</dbReference>
<dbReference type="HAMAP" id="MF_01368">
    <property type="entry name" value="Ribosomal_bL17"/>
    <property type="match status" value="1"/>
</dbReference>
<dbReference type="InterPro" id="IPR000456">
    <property type="entry name" value="Ribosomal_bL17"/>
</dbReference>
<dbReference type="InterPro" id="IPR047859">
    <property type="entry name" value="Ribosomal_bL17_CS"/>
</dbReference>
<dbReference type="InterPro" id="IPR036373">
    <property type="entry name" value="Ribosomal_bL17_sf"/>
</dbReference>
<dbReference type="NCBIfam" id="TIGR00059">
    <property type="entry name" value="L17"/>
    <property type="match status" value="1"/>
</dbReference>
<dbReference type="PANTHER" id="PTHR14413:SF16">
    <property type="entry name" value="LARGE RIBOSOMAL SUBUNIT PROTEIN BL17M"/>
    <property type="match status" value="1"/>
</dbReference>
<dbReference type="PANTHER" id="PTHR14413">
    <property type="entry name" value="RIBOSOMAL PROTEIN L17"/>
    <property type="match status" value="1"/>
</dbReference>
<dbReference type="Pfam" id="PF01196">
    <property type="entry name" value="Ribosomal_L17"/>
    <property type="match status" value="1"/>
</dbReference>
<dbReference type="SUPFAM" id="SSF64263">
    <property type="entry name" value="Prokaryotic ribosomal protein L17"/>
    <property type="match status" value="1"/>
</dbReference>
<dbReference type="PROSITE" id="PS01167">
    <property type="entry name" value="RIBOSOMAL_L17"/>
    <property type="match status" value="1"/>
</dbReference>
<keyword id="KW-1185">Reference proteome</keyword>
<keyword id="KW-0687">Ribonucleoprotein</keyword>
<keyword id="KW-0689">Ribosomal protein</keyword>
<accession>Q8EK46</accession>
<feature type="chain" id="PRO_0000267941" description="Large ribosomal subunit protein bL17">
    <location>
        <begin position="1"/>
        <end position="131"/>
    </location>
</feature>
<reference key="1">
    <citation type="journal article" date="2002" name="Nat. Biotechnol.">
        <title>Genome sequence of the dissimilatory metal ion-reducing bacterium Shewanella oneidensis.</title>
        <authorList>
            <person name="Heidelberg J.F."/>
            <person name="Paulsen I.T."/>
            <person name="Nelson K.E."/>
            <person name="Gaidos E.J."/>
            <person name="Nelson W.C."/>
            <person name="Read T.D."/>
            <person name="Eisen J.A."/>
            <person name="Seshadri R."/>
            <person name="Ward N.L."/>
            <person name="Methe B.A."/>
            <person name="Clayton R.A."/>
            <person name="Meyer T."/>
            <person name="Tsapin A."/>
            <person name="Scott J."/>
            <person name="Beanan M.J."/>
            <person name="Brinkac L.M."/>
            <person name="Daugherty S.C."/>
            <person name="DeBoy R.T."/>
            <person name="Dodson R.J."/>
            <person name="Durkin A.S."/>
            <person name="Haft D.H."/>
            <person name="Kolonay J.F."/>
            <person name="Madupu R."/>
            <person name="Peterson J.D."/>
            <person name="Umayam L.A."/>
            <person name="White O."/>
            <person name="Wolf A.M."/>
            <person name="Vamathevan J.J."/>
            <person name="Weidman J.F."/>
            <person name="Impraim M."/>
            <person name="Lee K."/>
            <person name="Berry K.J."/>
            <person name="Lee C."/>
            <person name="Mueller J."/>
            <person name="Khouri H.M."/>
            <person name="Gill J."/>
            <person name="Utterback T.R."/>
            <person name="McDonald L.A."/>
            <person name="Feldblyum T.V."/>
            <person name="Smith H.O."/>
            <person name="Venter J.C."/>
            <person name="Nealson K.H."/>
            <person name="Fraser C.M."/>
        </authorList>
    </citation>
    <scope>NUCLEOTIDE SEQUENCE [LARGE SCALE GENOMIC DNA]</scope>
    <source>
        <strain>ATCC 700550 / JCM 31522 / CIP 106686 / LMG 19005 / NCIMB 14063 / MR-1</strain>
    </source>
</reference>
<evidence type="ECO:0000255" key="1">
    <source>
        <dbReference type="HAMAP-Rule" id="MF_01368"/>
    </source>
</evidence>
<evidence type="ECO:0000305" key="2"/>
<proteinExistence type="inferred from homology"/>
<sequence length="131" mass="14714">MRHRKSGRQLNRNSSHRQAMFRNMASSLVRHEIIKTTVAKAKELRRVVEPLITLAKSDSVANRRLAFARTRDAEVVGKLFTELGPRYQERPGGYTRILKCGLRAGDKAPMAYIELVGRPEAAQAVDVEAAE</sequence>
<comment type="subunit">
    <text evidence="1">Part of the 50S ribosomal subunit. Contacts protein L32.</text>
</comment>
<comment type="similarity">
    <text evidence="1">Belongs to the bacterial ribosomal protein bL17 family.</text>
</comment>